<comment type="function">
    <text evidence="1">Involved in the biosynthesis of isopentenyl diphosphate (IPP) and dimethylallyl diphosphate (DMAPP), two major building blocks of isoprenoid compounds. Catalyzes the conversion of 4-diphosphocytidyl-2-C-methyl-D-erythritol 2-phosphate (CDP-ME2P) to 2-C-methyl-D-erythritol 2,4-cyclodiphosphate (ME-CPP) with a corresponding release of cytidine 5-monophosphate (CMP).</text>
</comment>
<comment type="catalytic activity">
    <reaction evidence="1">
        <text>4-CDP-2-C-methyl-D-erythritol 2-phosphate = 2-C-methyl-D-erythritol 2,4-cyclic diphosphate + CMP</text>
        <dbReference type="Rhea" id="RHEA:23864"/>
        <dbReference type="ChEBI" id="CHEBI:57919"/>
        <dbReference type="ChEBI" id="CHEBI:58483"/>
        <dbReference type="ChEBI" id="CHEBI:60377"/>
        <dbReference type="EC" id="4.6.1.12"/>
    </reaction>
</comment>
<comment type="cofactor">
    <cofactor evidence="1">
        <name>a divalent metal cation</name>
        <dbReference type="ChEBI" id="CHEBI:60240"/>
    </cofactor>
    <text evidence="1">Binds 1 divalent metal cation per subunit.</text>
</comment>
<comment type="pathway">
    <text evidence="1">Isoprenoid biosynthesis; isopentenyl diphosphate biosynthesis via DXP pathway; isopentenyl diphosphate from 1-deoxy-D-xylulose 5-phosphate: step 4/6.</text>
</comment>
<comment type="subunit">
    <text evidence="1">Homotrimer.</text>
</comment>
<comment type="similarity">
    <text evidence="1">Belongs to the IspF family.</text>
</comment>
<accession>A8M7S7</accession>
<dbReference type="EC" id="4.6.1.12" evidence="1"/>
<dbReference type="EMBL" id="CP000850">
    <property type="protein sequence ID" value="ABW00444.1"/>
    <property type="molecule type" value="Genomic_DNA"/>
</dbReference>
<dbReference type="SMR" id="A8M7S7"/>
<dbReference type="STRING" id="391037.Sare_4690"/>
<dbReference type="KEGG" id="saq:Sare_4690"/>
<dbReference type="PATRIC" id="fig|391037.6.peg.4740"/>
<dbReference type="eggNOG" id="COG0245">
    <property type="taxonomic scope" value="Bacteria"/>
</dbReference>
<dbReference type="HOGENOM" id="CLU_084630_1_0_11"/>
<dbReference type="OrthoDB" id="9804336at2"/>
<dbReference type="UniPathway" id="UPA00056">
    <property type="reaction ID" value="UER00095"/>
</dbReference>
<dbReference type="GO" id="GO:0008685">
    <property type="term" value="F:2-C-methyl-D-erythritol 2,4-cyclodiphosphate synthase activity"/>
    <property type="evidence" value="ECO:0007669"/>
    <property type="project" value="UniProtKB-UniRule"/>
</dbReference>
<dbReference type="GO" id="GO:0046872">
    <property type="term" value="F:metal ion binding"/>
    <property type="evidence" value="ECO:0007669"/>
    <property type="project" value="UniProtKB-KW"/>
</dbReference>
<dbReference type="GO" id="GO:0019288">
    <property type="term" value="P:isopentenyl diphosphate biosynthetic process, methylerythritol 4-phosphate pathway"/>
    <property type="evidence" value="ECO:0007669"/>
    <property type="project" value="UniProtKB-UniRule"/>
</dbReference>
<dbReference type="GO" id="GO:0016114">
    <property type="term" value="P:terpenoid biosynthetic process"/>
    <property type="evidence" value="ECO:0007669"/>
    <property type="project" value="InterPro"/>
</dbReference>
<dbReference type="CDD" id="cd00554">
    <property type="entry name" value="MECDP_synthase"/>
    <property type="match status" value="1"/>
</dbReference>
<dbReference type="FunFam" id="3.30.1330.50:FF:000003">
    <property type="entry name" value="2-C-methyl-D-erythritol 2,4-cyclodiphosphate synthase"/>
    <property type="match status" value="1"/>
</dbReference>
<dbReference type="Gene3D" id="3.30.1330.50">
    <property type="entry name" value="2-C-methyl-D-erythritol 2,4-cyclodiphosphate synthase"/>
    <property type="match status" value="1"/>
</dbReference>
<dbReference type="HAMAP" id="MF_00107">
    <property type="entry name" value="IspF"/>
    <property type="match status" value="1"/>
</dbReference>
<dbReference type="InterPro" id="IPR003526">
    <property type="entry name" value="MECDP_synthase"/>
</dbReference>
<dbReference type="InterPro" id="IPR020555">
    <property type="entry name" value="MECDP_synthase_CS"/>
</dbReference>
<dbReference type="InterPro" id="IPR036571">
    <property type="entry name" value="MECDP_synthase_sf"/>
</dbReference>
<dbReference type="NCBIfam" id="TIGR00151">
    <property type="entry name" value="ispF"/>
    <property type="match status" value="1"/>
</dbReference>
<dbReference type="PANTHER" id="PTHR43181">
    <property type="entry name" value="2-C-METHYL-D-ERYTHRITOL 2,4-CYCLODIPHOSPHATE SYNTHASE, CHLOROPLASTIC"/>
    <property type="match status" value="1"/>
</dbReference>
<dbReference type="PANTHER" id="PTHR43181:SF1">
    <property type="entry name" value="2-C-METHYL-D-ERYTHRITOL 2,4-CYCLODIPHOSPHATE SYNTHASE, CHLOROPLASTIC"/>
    <property type="match status" value="1"/>
</dbReference>
<dbReference type="Pfam" id="PF02542">
    <property type="entry name" value="YgbB"/>
    <property type="match status" value="1"/>
</dbReference>
<dbReference type="SUPFAM" id="SSF69765">
    <property type="entry name" value="IpsF-like"/>
    <property type="match status" value="1"/>
</dbReference>
<dbReference type="PROSITE" id="PS01350">
    <property type="entry name" value="ISPF"/>
    <property type="match status" value="1"/>
</dbReference>
<keyword id="KW-0414">Isoprene biosynthesis</keyword>
<keyword id="KW-0456">Lyase</keyword>
<keyword id="KW-0479">Metal-binding</keyword>
<protein>
    <recommendedName>
        <fullName evidence="1">2-C-methyl-D-erythritol 2,4-cyclodiphosphate synthase</fullName>
        <shortName evidence="1">MECDP-synthase</shortName>
        <shortName evidence="1">MECPP-synthase</shortName>
        <shortName evidence="1">MECPS</shortName>
        <ecNumber evidence="1">4.6.1.12</ecNumber>
    </recommendedName>
</protein>
<name>ISPF_SALAI</name>
<gene>
    <name evidence="1" type="primary">ispF</name>
    <name type="ordered locus">Sare_4690</name>
</gene>
<proteinExistence type="inferred from homology"/>
<evidence type="ECO:0000255" key="1">
    <source>
        <dbReference type="HAMAP-Rule" id="MF_00107"/>
    </source>
</evidence>
<reference key="1">
    <citation type="submission" date="2007-10" db="EMBL/GenBank/DDBJ databases">
        <title>Complete sequence of Salinispora arenicola CNS-205.</title>
        <authorList>
            <consortium name="US DOE Joint Genome Institute"/>
            <person name="Copeland A."/>
            <person name="Lucas S."/>
            <person name="Lapidus A."/>
            <person name="Barry K."/>
            <person name="Glavina del Rio T."/>
            <person name="Dalin E."/>
            <person name="Tice H."/>
            <person name="Pitluck S."/>
            <person name="Foster B."/>
            <person name="Schmutz J."/>
            <person name="Larimer F."/>
            <person name="Land M."/>
            <person name="Hauser L."/>
            <person name="Kyrpides N."/>
            <person name="Ivanova N."/>
            <person name="Jensen P.R."/>
            <person name="Moore B.S."/>
            <person name="Penn K."/>
            <person name="Jenkins C."/>
            <person name="Udwary D."/>
            <person name="Xiang L."/>
            <person name="Gontang E."/>
            <person name="Richardson P."/>
        </authorList>
    </citation>
    <scope>NUCLEOTIDE SEQUENCE [LARGE SCALE GENOMIC DNA]</scope>
    <source>
        <strain>CNS-205</strain>
    </source>
</reference>
<feature type="chain" id="PRO_1000202887" description="2-C-methyl-D-erythritol 2,4-cyclodiphosphate synthase">
    <location>
        <begin position="1"/>
        <end position="161"/>
    </location>
</feature>
<feature type="binding site" evidence="1">
    <location>
        <begin position="12"/>
        <end position="14"/>
    </location>
    <ligand>
        <name>4-CDP-2-C-methyl-D-erythritol 2-phosphate</name>
        <dbReference type="ChEBI" id="CHEBI:57919"/>
    </ligand>
</feature>
<feature type="binding site" evidence="1">
    <location>
        <position position="12"/>
    </location>
    <ligand>
        <name>a divalent metal cation</name>
        <dbReference type="ChEBI" id="CHEBI:60240"/>
    </ligand>
</feature>
<feature type="binding site" evidence="1">
    <location>
        <position position="14"/>
    </location>
    <ligand>
        <name>a divalent metal cation</name>
        <dbReference type="ChEBI" id="CHEBI:60240"/>
    </ligand>
</feature>
<feature type="binding site" evidence="1">
    <location>
        <begin position="38"/>
        <end position="39"/>
    </location>
    <ligand>
        <name>4-CDP-2-C-methyl-D-erythritol 2-phosphate</name>
        <dbReference type="ChEBI" id="CHEBI:57919"/>
    </ligand>
</feature>
<feature type="binding site" evidence="1">
    <location>
        <position position="46"/>
    </location>
    <ligand>
        <name>a divalent metal cation</name>
        <dbReference type="ChEBI" id="CHEBI:60240"/>
    </ligand>
</feature>
<feature type="binding site" evidence="1">
    <location>
        <begin position="60"/>
        <end position="62"/>
    </location>
    <ligand>
        <name>4-CDP-2-C-methyl-D-erythritol 2-phosphate</name>
        <dbReference type="ChEBI" id="CHEBI:57919"/>
    </ligand>
</feature>
<feature type="binding site" evidence="1">
    <location>
        <position position="140"/>
    </location>
    <ligand>
        <name>4-CDP-2-C-methyl-D-erythritol 2-phosphate</name>
        <dbReference type="ChEBI" id="CHEBI:57919"/>
    </ligand>
</feature>
<feature type="binding site" evidence="1">
    <location>
        <position position="143"/>
    </location>
    <ligand>
        <name>4-CDP-2-C-methyl-D-erythritol 2-phosphate</name>
        <dbReference type="ChEBI" id="CHEBI:57919"/>
    </ligand>
</feature>
<feature type="site" description="Transition state stabilizer" evidence="1">
    <location>
        <position position="38"/>
    </location>
</feature>
<feature type="site" description="Transition state stabilizer" evidence="1">
    <location>
        <position position="134"/>
    </location>
</feature>
<organism>
    <name type="scientific">Salinispora arenicola (strain CNS-205)</name>
    <dbReference type="NCBI Taxonomy" id="391037"/>
    <lineage>
        <taxon>Bacteria</taxon>
        <taxon>Bacillati</taxon>
        <taxon>Actinomycetota</taxon>
        <taxon>Actinomycetes</taxon>
        <taxon>Micromonosporales</taxon>
        <taxon>Micromonosporaceae</taxon>
        <taxon>Salinispora</taxon>
    </lineage>
</organism>
<sequence length="161" mass="16022">MVIVPRVAIGVDTHAFESGRPCWVAGLHWPGQDGLAGHSDADVAAHAACNALLSAADLGDLGANFGVGQPEWSGASGVALLTESASRVRAAGYAIGNVSVQVIGNRPKIGSRRAEAQRVLSGAVGAPVSISAATTDGLGFPGRGEGLTGIAVALVYEAPDA</sequence>